<sequence length="257" mass="28799">MLILVSPAKTLDFEQPPLTQIHTRPDFLAQSQELIQVCQQLTPSDIATLMKVSDSIAGLNAARFGEWKPDYSIDNAKQAIFAFRGDVYTGFDADTLTAAQLERTQSQLRILSGLYGLLRPLDLILPYRLEMGTALTNQKGKNLYEFWGNTLTDAVNSAVAAQGDGIIINLASNEYFKAIKPKFLNGQLITPVFKDFKNGQYKVISFFAKRARGMMARYIIDQQVSSIDGLKAFEVDGYYYSEELSKPNEPTFLREAQ</sequence>
<keyword id="KW-1185">Reference proteome</keyword>
<accession>Q8EBH6</accession>
<evidence type="ECO:0000255" key="1">
    <source>
        <dbReference type="HAMAP-Rule" id="MF_00652"/>
    </source>
</evidence>
<organism>
    <name type="scientific">Shewanella oneidensis (strain ATCC 700550 / JCM 31522 / CIP 106686 / LMG 19005 / NCIMB 14063 / MR-1)</name>
    <dbReference type="NCBI Taxonomy" id="211586"/>
    <lineage>
        <taxon>Bacteria</taxon>
        <taxon>Pseudomonadati</taxon>
        <taxon>Pseudomonadota</taxon>
        <taxon>Gammaproteobacteria</taxon>
        <taxon>Alteromonadales</taxon>
        <taxon>Shewanellaceae</taxon>
        <taxon>Shewanella</taxon>
    </lineage>
</organism>
<feature type="chain" id="PRO_0000204003" description="UPF0246 protein SO_3540">
    <location>
        <begin position="1"/>
        <end position="257"/>
    </location>
</feature>
<comment type="similarity">
    <text evidence="1">Belongs to the UPF0246 family.</text>
</comment>
<reference key="1">
    <citation type="journal article" date="2002" name="Nat. Biotechnol.">
        <title>Genome sequence of the dissimilatory metal ion-reducing bacterium Shewanella oneidensis.</title>
        <authorList>
            <person name="Heidelberg J.F."/>
            <person name="Paulsen I.T."/>
            <person name="Nelson K.E."/>
            <person name="Gaidos E.J."/>
            <person name="Nelson W.C."/>
            <person name="Read T.D."/>
            <person name="Eisen J.A."/>
            <person name="Seshadri R."/>
            <person name="Ward N.L."/>
            <person name="Methe B.A."/>
            <person name="Clayton R.A."/>
            <person name="Meyer T."/>
            <person name="Tsapin A."/>
            <person name="Scott J."/>
            <person name="Beanan M.J."/>
            <person name="Brinkac L.M."/>
            <person name="Daugherty S.C."/>
            <person name="DeBoy R.T."/>
            <person name="Dodson R.J."/>
            <person name="Durkin A.S."/>
            <person name="Haft D.H."/>
            <person name="Kolonay J.F."/>
            <person name="Madupu R."/>
            <person name="Peterson J.D."/>
            <person name="Umayam L.A."/>
            <person name="White O."/>
            <person name="Wolf A.M."/>
            <person name="Vamathevan J.J."/>
            <person name="Weidman J.F."/>
            <person name="Impraim M."/>
            <person name="Lee K."/>
            <person name="Berry K.J."/>
            <person name="Lee C."/>
            <person name="Mueller J."/>
            <person name="Khouri H.M."/>
            <person name="Gill J."/>
            <person name="Utterback T.R."/>
            <person name="McDonald L.A."/>
            <person name="Feldblyum T.V."/>
            <person name="Smith H.O."/>
            <person name="Venter J.C."/>
            <person name="Nealson K.H."/>
            <person name="Fraser C.M."/>
        </authorList>
    </citation>
    <scope>NUCLEOTIDE SEQUENCE [LARGE SCALE GENOMIC DNA]</scope>
    <source>
        <strain>ATCC 700550 / JCM 31522 / CIP 106686 / LMG 19005 / NCIMB 14063 / MR-1</strain>
    </source>
</reference>
<dbReference type="EMBL" id="AE014299">
    <property type="protein sequence ID" value="AAN56531.1"/>
    <property type="molecule type" value="Genomic_DNA"/>
</dbReference>
<dbReference type="RefSeq" id="NP_719087.1">
    <property type="nucleotide sequence ID" value="NC_004347.2"/>
</dbReference>
<dbReference type="RefSeq" id="WP_011073370.1">
    <property type="nucleotide sequence ID" value="NC_004347.2"/>
</dbReference>
<dbReference type="SMR" id="Q8EBH6"/>
<dbReference type="PaxDb" id="211586-SO_3540"/>
<dbReference type="KEGG" id="son:SO_3540"/>
<dbReference type="PATRIC" id="fig|211586.12.peg.3434"/>
<dbReference type="eggNOG" id="COG3022">
    <property type="taxonomic scope" value="Bacteria"/>
</dbReference>
<dbReference type="HOGENOM" id="CLU_061989_0_0_6"/>
<dbReference type="OrthoDB" id="9777133at2"/>
<dbReference type="PhylomeDB" id="Q8EBH6"/>
<dbReference type="BioCyc" id="SONE211586:G1GMP-3300-MONOMER"/>
<dbReference type="Proteomes" id="UP000008186">
    <property type="component" value="Chromosome"/>
</dbReference>
<dbReference type="GO" id="GO:0005829">
    <property type="term" value="C:cytosol"/>
    <property type="evidence" value="ECO:0000318"/>
    <property type="project" value="GO_Central"/>
</dbReference>
<dbReference type="GO" id="GO:0033194">
    <property type="term" value="P:response to hydroperoxide"/>
    <property type="evidence" value="ECO:0000318"/>
    <property type="project" value="GO_Central"/>
</dbReference>
<dbReference type="HAMAP" id="MF_00652">
    <property type="entry name" value="UPF0246"/>
    <property type="match status" value="1"/>
</dbReference>
<dbReference type="InterPro" id="IPR005583">
    <property type="entry name" value="YaaA"/>
</dbReference>
<dbReference type="NCBIfam" id="NF002541">
    <property type="entry name" value="PRK02101.1-1"/>
    <property type="match status" value="1"/>
</dbReference>
<dbReference type="NCBIfam" id="NF002542">
    <property type="entry name" value="PRK02101.1-3"/>
    <property type="match status" value="1"/>
</dbReference>
<dbReference type="PANTHER" id="PTHR30283:SF4">
    <property type="entry name" value="PEROXIDE STRESS RESISTANCE PROTEIN YAAA"/>
    <property type="match status" value="1"/>
</dbReference>
<dbReference type="PANTHER" id="PTHR30283">
    <property type="entry name" value="PEROXIDE STRESS RESPONSE PROTEIN YAAA"/>
    <property type="match status" value="1"/>
</dbReference>
<dbReference type="Pfam" id="PF03883">
    <property type="entry name" value="H2O2_YaaD"/>
    <property type="match status" value="1"/>
</dbReference>
<gene>
    <name type="ordered locus">SO_3540</name>
</gene>
<proteinExistence type="inferred from homology"/>
<protein>
    <recommendedName>
        <fullName evidence="1">UPF0246 protein SO_3540</fullName>
    </recommendedName>
</protein>
<name>Y3540_SHEON</name>